<protein>
    <recommendedName>
        <fullName>HTH-type transcriptional regulator CmtR</fullName>
    </recommendedName>
</protein>
<name>CMTR_MYCTU</name>
<keyword id="KW-0002">3D-structure</keyword>
<keyword id="KW-0104">Cadmium</keyword>
<keyword id="KW-0238">DNA-binding</keyword>
<keyword id="KW-0479">Metal-binding</keyword>
<keyword id="KW-1185">Reference proteome</keyword>
<keyword id="KW-0804">Transcription</keyword>
<keyword id="KW-0805">Transcription regulation</keyword>
<feature type="chain" id="PRO_0000160629" description="HTH-type transcriptional regulator CmtR">
    <location>
        <begin position="1"/>
        <end position="118"/>
    </location>
</feature>
<feature type="domain" description="HTH arsR-type" evidence="1">
    <location>
        <begin position="3"/>
        <end position="97"/>
    </location>
</feature>
<feature type="binding site" description="in other chain">
    <location>
        <position position="57"/>
    </location>
    <ligand>
        <name>Cd(2+)</name>
        <dbReference type="ChEBI" id="CHEBI:48775"/>
        <note>ligand shared between dimeric partners</note>
    </ligand>
</feature>
<feature type="binding site" description="in other chain">
    <location>
        <position position="61"/>
    </location>
    <ligand>
        <name>Cd(2+)</name>
        <dbReference type="ChEBI" id="CHEBI:48775"/>
        <note>ligand shared between dimeric partners</note>
    </ligand>
</feature>
<feature type="binding site">
    <location>
        <position position="102"/>
    </location>
    <ligand>
        <name>Cd(2+)</name>
        <dbReference type="ChEBI" id="CHEBI:48775"/>
        <note>ligand shared between dimeric partners</note>
    </ligand>
</feature>
<feature type="mutagenesis site" description="No effect." evidence="2">
    <original>C</original>
    <variation>S</variation>
    <location>
        <position position="4"/>
    </location>
</feature>
<feature type="mutagenesis site" description="Loss of repressor activity." evidence="2">
    <original>C</original>
    <variation>S</variation>
    <location>
        <position position="24"/>
    </location>
</feature>
<feature type="mutagenesis site" description="Abolishes metal-induced derepression." evidence="2">
    <original>C</original>
    <variation>S</variation>
    <location>
        <position position="57"/>
    </location>
</feature>
<feature type="mutagenesis site" description="Abolishes metal-induced derepression." evidence="2">
    <original>C</original>
    <variation>S</variation>
    <location>
        <position position="61"/>
    </location>
</feature>
<feature type="mutagenesis site" description="Abolishes metal-induced derepression." evidence="2">
    <original>C</original>
    <variation>S</variation>
    <location>
        <position position="102"/>
    </location>
</feature>
<feature type="helix" evidence="5">
    <location>
        <begin position="14"/>
        <end position="18"/>
    </location>
</feature>
<feature type="helix" evidence="5">
    <location>
        <begin position="21"/>
        <end position="31"/>
    </location>
</feature>
<feature type="turn" evidence="5">
    <location>
        <begin position="37"/>
        <end position="39"/>
    </location>
</feature>
<feature type="helix" evidence="5">
    <location>
        <begin position="40"/>
        <end position="44"/>
    </location>
</feature>
<feature type="helix" evidence="5">
    <location>
        <begin position="48"/>
        <end position="58"/>
    </location>
</feature>
<feature type="turn" evidence="5">
    <location>
        <begin position="59"/>
        <end position="62"/>
    </location>
</feature>
<feature type="strand" evidence="5">
    <location>
        <begin position="63"/>
        <end position="68"/>
    </location>
</feature>
<feature type="strand" evidence="5">
    <location>
        <begin position="70"/>
        <end position="79"/>
    </location>
</feature>
<feature type="helix" evidence="5">
    <location>
        <begin position="80"/>
        <end position="88"/>
    </location>
</feature>
<feature type="strand" evidence="5">
    <location>
        <begin position="91"/>
        <end position="94"/>
    </location>
</feature>
<dbReference type="EMBL" id="AL123456">
    <property type="protein sequence ID" value="CCP44766.1"/>
    <property type="molecule type" value="Genomic_DNA"/>
</dbReference>
<dbReference type="PIR" id="H70757">
    <property type="entry name" value="H70757"/>
</dbReference>
<dbReference type="RefSeq" id="NP_216510.1">
    <property type="nucleotide sequence ID" value="NC_000962.3"/>
</dbReference>
<dbReference type="RefSeq" id="WP_003410018.1">
    <property type="nucleotide sequence ID" value="NZ_NVQJ01000043.1"/>
</dbReference>
<dbReference type="PDB" id="2JSC">
    <property type="method" value="NMR"/>
    <property type="chains" value="A/B=1-118"/>
</dbReference>
<dbReference type="PDBsum" id="2JSC"/>
<dbReference type="BMRB" id="P9WMI9"/>
<dbReference type="SMR" id="P9WMI9"/>
<dbReference type="STRING" id="83332.Rv1994c"/>
<dbReference type="PaxDb" id="83332-Rv1994c"/>
<dbReference type="DNASU" id="888889"/>
<dbReference type="GeneID" id="45425973"/>
<dbReference type="GeneID" id="888889"/>
<dbReference type="KEGG" id="mtu:Rv1994c"/>
<dbReference type="KEGG" id="mtv:RVBD_1994c"/>
<dbReference type="TubercuList" id="Rv1994c"/>
<dbReference type="eggNOG" id="COG0640">
    <property type="taxonomic scope" value="Bacteria"/>
</dbReference>
<dbReference type="InParanoid" id="P9WMI9"/>
<dbReference type="OrthoDB" id="3401849at2"/>
<dbReference type="PhylomeDB" id="P9WMI9"/>
<dbReference type="EvolutionaryTrace" id="P9WMI9"/>
<dbReference type="Proteomes" id="UP000001584">
    <property type="component" value="Chromosome"/>
</dbReference>
<dbReference type="GO" id="GO:0046870">
    <property type="term" value="F:cadmium ion binding"/>
    <property type="evidence" value="ECO:0000314"/>
    <property type="project" value="MTBBASE"/>
</dbReference>
<dbReference type="GO" id="GO:0097063">
    <property type="term" value="F:cadmium ion sensor activity"/>
    <property type="evidence" value="ECO:0000314"/>
    <property type="project" value="MTBBASE"/>
</dbReference>
<dbReference type="GO" id="GO:0003677">
    <property type="term" value="F:DNA binding"/>
    <property type="evidence" value="ECO:0000314"/>
    <property type="project" value="MTBBASE"/>
</dbReference>
<dbReference type="GO" id="GO:0003700">
    <property type="term" value="F:DNA-binding transcription factor activity"/>
    <property type="evidence" value="ECO:0000315"/>
    <property type="project" value="MTBBASE"/>
</dbReference>
<dbReference type="GO" id="GO:0032791">
    <property type="term" value="F:lead ion binding"/>
    <property type="evidence" value="ECO:0000314"/>
    <property type="project" value="MTBBASE"/>
</dbReference>
<dbReference type="GO" id="GO:0010468">
    <property type="term" value="P:regulation of gene expression"/>
    <property type="evidence" value="ECO:0000314"/>
    <property type="project" value="MTBBASE"/>
</dbReference>
<dbReference type="GO" id="GO:0046686">
    <property type="term" value="P:response to cadmium ion"/>
    <property type="evidence" value="ECO:0000315"/>
    <property type="project" value="MTBBASE"/>
</dbReference>
<dbReference type="GO" id="GO:0010288">
    <property type="term" value="P:response to lead ion"/>
    <property type="evidence" value="ECO:0000315"/>
    <property type="project" value="MTBBASE"/>
</dbReference>
<dbReference type="CDD" id="cd00090">
    <property type="entry name" value="HTH_ARSR"/>
    <property type="match status" value="1"/>
</dbReference>
<dbReference type="FunFam" id="1.10.10.10:FF:000373">
    <property type="entry name" value="ArsR family transcriptional regulator"/>
    <property type="match status" value="1"/>
</dbReference>
<dbReference type="Gene3D" id="1.10.10.10">
    <property type="entry name" value="Winged helix-like DNA-binding domain superfamily/Winged helix DNA-binding domain"/>
    <property type="match status" value="1"/>
</dbReference>
<dbReference type="InterPro" id="IPR011991">
    <property type="entry name" value="ArsR-like_HTH"/>
</dbReference>
<dbReference type="InterPro" id="IPR001845">
    <property type="entry name" value="HTH_ArsR_DNA-bd_dom"/>
</dbReference>
<dbReference type="InterPro" id="IPR052543">
    <property type="entry name" value="HTH_Metal-responsive_Reg"/>
</dbReference>
<dbReference type="InterPro" id="IPR036388">
    <property type="entry name" value="WH-like_DNA-bd_sf"/>
</dbReference>
<dbReference type="InterPro" id="IPR036390">
    <property type="entry name" value="WH_DNA-bd_sf"/>
</dbReference>
<dbReference type="NCBIfam" id="NF033788">
    <property type="entry name" value="HTH_metalloreg"/>
    <property type="match status" value="1"/>
</dbReference>
<dbReference type="PANTHER" id="PTHR39168:SF2">
    <property type="entry name" value="HTH-TYPE TRANSCRIPTIONAL REGULATOR CMTR"/>
    <property type="match status" value="1"/>
</dbReference>
<dbReference type="PANTHER" id="PTHR39168">
    <property type="entry name" value="TRANSCRIPTIONAL REGULATOR-RELATED"/>
    <property type="match status" value="1"/>
</dbReference>
<dbReference type="Pfam" id="PF01022">
    <property type="entry name" value="HTH_5"/>
    <property type="match status" value="1"/>
</dbReference>
<dbReference type="PRINTS" id="PR00778">
    <property type="entry name" value="HTHARSR"/>
</dbReference>
<dbReference type="SMART" id="SM00418">
    <property type="entry name" value="HTH_ARSR"/>
    <property type="match status" value="1"/>
</dbReference>
<dbReference type="SUPFAM" id="SSF46785">
    <property type="entry name" value="Winged helix' DNA-binding domain"/>
    <property type="match status" value="1"/>
</dbReference>
<dbReference type="PROSITE" id="PS50987">
    <property type="entry name" value="HTH_ARSR_2"/>
    <property type="match status" value="1"/>
</dbReference>
<comment type="function">
    <text evidence="2 3">Metal-responsive transcriptional repressor for the cmt operon. Binding of cadmium or lead causes the repressor to dissociate from the DNA.</text>
</comment>
<comment type="subunit">
    <text evidence="3 4">Homodimer.</text>
</comment>
<comment type="mass spectrometry">
    <text>The measured mass is that of a dimer, plus 2 cadmium ions.</text>
</comment>
<proteinExistence type="evidence at protein level"/>
<accession>P9WMI9</accession>
<accession>L0T9V9</accession>
<accession>P67731</accession>
<accession>Q10864</accession>
<sequence>MLTCEMRESALARLGRALADPTRCRILVALLDGVCYPGQLAAHLGLTRSNVSNHLSCLRGCGLVVATYEGRQVRYALADSHLARALGELVQVVLAVDTDQPCVAERAASGEAVEMTGS</sequence>
<evidence type="ECO:0000255" key="1">
    <source>
        <dbReference type="PROSITE-ProRule" id="PRU00340"/>
    </source>
</evidence>
<evidence type="ECO:0000269" key="2">
    <source>
    </source>
</evidence>
<evidence type="ECO:0000269" key="3">
    <source>
    </source>
</evidence>
<evidence type="ECO:0000269" key="4">
    <source>
    </source>
</evidence>
<evidence type="ECO:0007829" key="5">
    <source>
        <dbReference type="PDB" id="2JSC"/>
    </source>
</evidence>
<reference key="1">
    <citation type="journal article" date="1998" name="Nature">
        <title>Deciphering the biology of Mycobacterium tuberculosis from the complete genome sequence.</title>
        <authorList>
            <person name="Cole S.T."/>
            <person name="Brosch R."/>
            <person name="Parkhill J."/>
            <person name="Garnier T."/>
            <person name="Churcher C.M."/>
            <person name="Harris D.E."/>
            <person name="Gordon S.V."/>
            <person name="Eiglmeier K."/>
            <person name="Gas S."/>
            <person name="Barry C.E. III"/>
            <person name="Tekaia F."/>
            <person name="Badcock K."/>
            <person name="Basham D."/>
            <person name="Brown D."/>
            <person name="Chillingworth T."/>
            <person name="Connor R."/>
            <person name="Davies R.M."/>
            <person name="Devlin K."/>
            <person name="Feltwell T."/>
            <person name="Gentles S."/>
            <person name="Hamlin N."/>
            <person name="Holroyd S."/>
            <person name="Hornsby T."/>
            <person name="Jagels K."/>
            <person name="Krogh A."/>
            <person name="McLean J."/>
            <person name="Moule S."/>
            <person name="Murphy L.D."/>
            <person name="Oliver S."/>
            <person name="Osborne J."/>
            <person name="Quail M.A."/>
            <person name="Rajandream M.A."/>
            <person name="Rogers J."/>
            <person name="Rutter S."/>
            <person name="Seeger K."/>
            <person name="Skelton S."/>
            <person name="Squares S."/>
            <person name="Squares R."/>
            <person name="Sulston J.E."/>
            <person name="Taylor K."/>
            <person name="Whitehead S."/>
            <person name="Barrell B.G."/>
        </authorList>
    </citation>
    <scope>NUCLEOTIDE SEQUENCE [LARGE SCALE GENOMIC DNA]</scope>
    <source>
        <strain>ATCC 25618 / H37Rv</strain>
    </source>
</reference>
<reference key="2">
    <citation type="journal article" date="2003" name="J. Biol. Chem.">
        <title>A cadmium-lead-sensing ArsR-SmtB repressor with novel sensory sites. Complementary metal discrimination by NmtR and CmtR in a common cytosol.</title>
        <authorList>
            <person name="Cavet J.S."/>
            <person name="Graham A.I."/>
            <person name="Meng W."/>
            <person name="Robinson N.J."/>
        </authorList>
    </citation>
    <scope>FUNCTION</scope>
    <scope>MUTAGENESIS OF CYS-4; CYS-24; CYS-57; CYS-61 AND CYS-102</scope>
</reference>
<reference key="3">
    <citation type="journal article" date="2005" name="Biochemistry">
        <title>Structural and functional characterization of Mycobacterium tuberculosis CmtR, a PbII/CdII-sensing SmtB/ArsR metalloregulatory repressor.</title>
        <authorList>
            <person name="Wang Y."/>
            <person name="Hemmingsen L."/>
            <person name="Giedroc D.P."/>
        </authorList>
    </citation>
    <scope>FUNCTION</scope>
    <scope>SUBUNIT</scope>
</reference>
<reference key="4">
    <citation type="journal article" date="2011" name="Mol. Cell. Proteomics">
        <title>Proteogenomic analysis of Mycobacterium tuberculosis by high resolution mass spectrometry.</title>
        <authorList>
            <person name="Kelkar D.S."/>
            <person name="Kumar D."/>
            <person name="Kumar P."/>
            <person name="Balakrishnan L."/>
            <person name="Muthusamy B."/>
            <person name="Yadav A.K."/>
            <person name="Shrivastava P."/>
            <person name="Marimuthu A."/>
            <person name="Anand S."/>
            <person name="Sundaram H."/>
            <person name="Kingsbury R."/>
            <person name="Harsha H.C."/>
            <person name="Nair B."/>
            <person name="Prasad T.S."/>
            <person name="Chauhan D.S."/>
            <person name="Katoch K."/>
            <person name="Katoch V.M."/>
            <person name="Kumar P."/>
            <person name="Chaerkady R."/>
            <person name="Ramachandran S."/>
            <person name="Dash D."/>
            <person name="Pandey A."/>
        </authorList>
    </citation>
    <scope>IDENTIFICATION BY MASS SPECTROMETRY [LARGE SCALE ANALYSIS]</scope>
    <source>
        <strain>ATCC 25618 / H37Rv</strain>
    </source>
</reference>
<reference key="5">
    <citation type="journal article" date="2007" name="J. Biol. Chem.">
        <title>NMR structural analysis of cadmium sensing by winged helix repressor CmtR.</title>
        <authorList>
            <person name="Banci L."/>
            <person name="Bertini I."/>
            <person name="Cantini F."/>
            <person name="Ciofi-Baffoni S."/>
            <person name="Cavet J.S."/>
            <person name="Dennison C."/>
            <person name="Graham A.I."/>
            <person name="Harvie D.R."/>
            <person name="Robinson N.J."/>
        </authorList>
    </citation>
    <scope>STRUCTURE BY NMR</scope>
    <scope>CADMIUM BINDING</scope>
    <scope>MASS SPECTROMETRY</scope>
    <scope>SUBUNIT</scope>
</reference>
<gene>
    <name type="primary">cmtR</name>
    <name type="ordered locus">Rv1994c</name>
    <name type="ORF">MTCY39.25</name>
</gene>
<organism>
    <name type="scientific">Mycobacterium tuberculosis (strain ATCC 25618 / H37Rv)</name>
    <dbReference type="NCBI Taxonomy" id="83332"/>
    <lineage>
        <taxon>Bacteria</taxon>
        <taxon>Bacillati</taxon>
        <taxon>Actinomycetota</taxon>
        <taxon>Actinomycetes</taxon>
        <taxon>Mycobacteriales</taxon>
        <taxon>Mycobacteriaceae</taxon>
        <taxon>Mycobacterium</taxon>
        <taxon>Mycobacterium tuberculosis complex</taxon>
    </lineage>
</organism>